<gene>
    <name evidence="3" type="primary">cap6</name>
    <name evidence="5" type="ORF">HR072_00395</name>
</gene>
<sequence>MSKSSVFDSVIDLPQRELTERENILLGFESRYESVHNQLNLLLNQGQLLDWSKKYHKSVLPLCKLVAEQYPLVIFHGDVGTGKTATAECIANRIVRESRTEDSALFKLSNRVRGSGKVGEMGTLLTQAWAEVCEAAGKNRRAILIIDEGDSIAASRSQNHSHHEDKVAVNTLIQGVDELRKFGGRVVVILCTNRLSVLDPALRRRAAIVEEFTRPGLTERESLFRMDLGGMGLSDSQYRQLALATGEKEHLPAWTYSDIRTRLYPAAMSRAFPERALSFNDLMELLKIMRPSPVMGDI</sequence>
<reference evidence="5" key="1">
    <citation type="journal article" date="2020" name="Microbiol. Resour. Announc.">
        <title>Complete Genome Sequences of Seven Uropathogenic Escherichia coli Strains Isolated from Postmenopausal Women with Recurrent Urinary Tract Infection.</title>
        <authorList>
            <person name="Sharon B.M."/>
            <person name="Nguyen A."/>
            <person name="Arute A.P."/>
            <person name="Hulyalkar N.V."/>
            <person name="Nguyen V.H."/>
            <person name="Zimmern P.E."/>
            <person name="De Nisco N.J."/>
        </authorList>
    </citation>
    <scope>NUCLEOTIDE SEQUENCE [LARGE SCALE GENOMIC DNA]</scope>
    <source>
        <strain>EcPF14 UPEC</strain>
    </source>
</reference>
<reference key="2">
    <citation type="journal article" date="2022" name="Nucleic Acids Res.">
        <title>Control of bacterial immune signaling by a WYL domain transcription factor.</title>
        <authorList>
            <person name="Blankenchip C.L."/>
            <person name="Nguyen J.V."/>
            <person name="Lau R.K."/>
            <person name="Ye Q."/>
            <person name="Gu Y."/>
            <person name="Corbett K.D."/>
        </authorList>
    </citation>
    <scope>FUNCTION IN VIRAL DEFENSE</scope>
    <source>
        <strain>EcPF14 UPEC</strain>
    </source>
</reference>
<accession>P0DX79</accession>
<dbReference type="EMBL" id="CP054230">
    <property type="protein sequence ID" value="QKY44558.1"/>
    <property type="molecule type" value="Genomic_DNA"/>
</dbReference>
<dbReference type="RefSeq" id="WP_001534689.1">
    <property type="nucleotide sequence ID" value="NZ_WIKR01000024.1"/>
</dbReference>
<dbReference type="SMR" id="P0DX79"/>
<dbReference type="GO" id="GO:0005524">
    <property type="term" value="F:ATP binding"/>
    <property type="evidence" value="ECO:0007669"/>
    <property type="project" value="UniProtKB-KW"/>
</dbReference>
<dbReference type="GO" id="GO:0016887">
    <property type="term" value="F:ATP hydrolysis activity"/>
    <property type="evidence" value="ECO:0007669"/>
    <property type="project" value="InterPro"/>
</dbReference>
<dbReference type="GO" id="GO:0051607">
    <property type="term" value="P:defense response to virus"/>
    <property type="evidence" value="ECO:0007669"/>
    <property type="project" value="UniProtKB-KW"/>
</dbReference>
<dbReference type="CDD" id="cd19481">
    <property type="entry name" value="RecA-like_protease"/>
    <property type="match status" value="1"/>
</dbReference>
<dbReference type="Gene3D" id="3.40.50.300">
    <property type="entry name" value="P-loop containing nucleotide triphosphate hydrolases"/>
    <property type="match status" value="1"/>
</dbReference>
<dbReference type="InterPro" id="IPR050221">
    <property type="entry name" value="26S_Proteasome_ATPase"/>
</dbReference>
<dbReference type="InterPro" id="IPR003593">
    <property type="entry name" value="AAA+_ATPase"/>
</dbReference>
<dbReference type="InterPro" id="IPR003959">
    <property type="entry name" value="ATPase_AAA_core"/>
</dbReference>
<dbReference type="InterPro" id="IPR003960">
    <property type="entry name" value="ATPase_AAA_CS"/>
</dbReference>
<dbReference type="InterPro" id="IPR027417">
    <property type="entry name" value="P-loop_NTPase"/>
</dbReference>
<dbReference type="PANTHER" id="PTHR23073">
    <property type="entry name" value="26S PROTEASOME REGULATORY SUBUNIT"/>
    <property type="match status" value="1"/>
</dbReference>
<dbReference type="Pfam" id="PF00004">
    <property type="entry name" value="AAA"/>
    <property type="match status" value="1"/>
</dbReference>
<dbReference type="SMART" id="SM00382">
    <property type="entry name" value="AAA"/>
    <property type="match status" value="1"/>
</dbReference>
<dbReference type="SUPFAM" id="SSF52540">
    <property type="entry name" value="P-loop containing nucleoside triphosphate hydrolases"/>
    <property type="match status" value="1"/>
</dbReference>
<dbReference type="PROSITE" id="PS00674">
    <property type="entry name" value="AAA"/>
    <property type="match status" value="1"/>
</dbReference>
<keyword id="KW-0051">Antiviral defense</keyword>
<keyword id="KW-0067">ATP-binding</keyword>
<keyword id="KW-0547">Nucleotide-binding</keyword>
<name>CAP6_ECOLX</name>
<protein>
    <recommendedName>
        <fullName evidence="3">CD-NTase-associated protein 6</fullName>
        <shortName evidence="3">Cap6</shortName>
    </recommendedName>
    <alternativeName>
        <fullName evidence="3">CBASS disassembly protein Trip13</fullName>
    </alternativeName>
</protein>
<proteinExistence type="evidence at protein level"/>
<feature type="chain" id="PRO_0000459325" description="CD-NTase-associated protein 6">
    <location>
        <begin position="1"/>
        <end position="298"/>
    </location>
</feature>
<feature type="binding site" evidence="1">
    <location>
        <begin position="80"/>
        <end position="85"/>
    </location>
    <ligand>
        <name>ATP</name>
        <dbReference type="ChEBI" id="CHEBI:30616"/>
    </ligand>
</feature>
<feature type="binding site" evidence="1">
    <location>
        <begin position="204"/>
        <end position="205"/>
    </location>
    <ligand>
        <name>ATP</name>
        <dbReference type="ChEBI" id="CHEBI:30616"/>
    </ligand>
</feature>
<organism>
    <name type="scientific">Escherichia coli</name>
    <dbReference type="NCBI Taxonomy" id="562"/>
    <lineage>
        <taxon>Bacteria</taxon>
        <taxon>Pseudomonadati</taxon>
        <taxon>Pseudomonadota</taxon>
        <taxon>Gammaproteobacteria</taxon>
        <taxon>Enterobacterales</taxon>
        <taxon>Enterobacteriaceae</taxon>
        <taxon>Escherichia</taxon>
    </lineage>
</organism>
<evidence type="ECO:0000250" key="1">
    <source>
        <dbReference type="UniProtKB" id="D7Y2H4"/>
    </source>
</evidence>
<evidence type="ECO:0000269" key="2">
    <source>
    </source>
</evidence>
<evidence type="ECO:0000303" key="3">
    <source>
    </source>
</evidence>
<evidence type="ECO:0000305" key="4"/>
<evidence type="ECO:0000312" key="5">
    <source>
        <dbReference type="EMBL" id="QKY44558.1"/>
    </source>
</evidence>
<comment type="function">
    <text evidence="1 2 3">Regulates complex assembly in a CBASS antivirus system (By similarity). CBASS (cyclic oligonucleotide-based antiphage signaling system) provides immunity against bacteriophage (PubMed:35536256). The CD-NTase protein synthesizes cyclic nucleotides in response to infection; these serve as specific second messenger signals (PubMed:35536256). The signals activate a diverse range of effectors, leading to bacterial cell death and thus abortive phage infection (PubMed:35536256). A type III CBASS system (PubMed:35536256). Expression of this CBASS system (Cap17-CapW-CdnC-Cap7-Cap6-Cap18-Cap19) in a susceptible E.coli (strain JP313) confers resistance to bacteriophage lambda cI- (PubMed:35536256). Binds and disassembles an active CdnC:Cap7 complex, inhibiting the complex's ability to synthesize cyclic nucleotide second messengers. An AAA+-ATPase remodeler, in the absence of foreign threat Cap6 probably maintains the Cap7 protein in its open, inactive state. Once activated (presumably by a bacteriophage protein) Cap7 binds to and activates its cognate CD-NTase (CdnC in this bacteria) to synthesize a cyclic nucleotide second messenger which leads to abortive phage infection (By similarity).</text>
</comment>
<comment type="subunit">
    <text evidence="1">Homohexamer, forms a 1:1:6 CdnC:Cap7:Cap6 complex.</text>
</comment>
<comment type="similarity">
    <text evidence="4">Belongs to the AAA ATPase family.</text>
</comment>